<accession>Q7SYS2</accession>
<accession>Q0D262</accession>
<accession>Q4QR38</accession>
<accession>Q6DCH4</accession>
<organism>
    <name type="scientific">Xenopus laevis</name>
    <name type="common">African clawed frog</name>
    <dbReference type="NCBI Taxonomy" id="8355"/>
    <lineage>
        <taxon>Eukaryota</taxon>
        <taxon>Metazoa</taxon>
        <taxon>Chordata</taxon>
        <taxon>Craniata</taxon>
        <taxon>Vertebrata</taxon>
        <taxon>Euteleostomi</taxon>
        <taxon>Amphibia</taxon>
        <taxon>Batrachia</taxon>
        <taxon>Anura</taxon>
        <taxon>Pipoidea</taxon>
        <taxon>Pipidae</taxon>
        <taxon>Xenopodinae</taxon>
        <taxon>Xenopus</taxon>
        <taxon>Xenopus</taxon>
    </lineage>
</organism>
<dbReference type="EMBL" id="BC054288">
    <property type="status" value="NOT_ANNOTATED_CDS"/>
    <property type="molecule type" value="mRNA"/>
</dbReference>
<dbReference type="EMBL" id="BC122487">
    <property type="status" value="NOT_ANNOTATED_CDS"/>
    <property type="molecule type" value="mRNA"/>
</dbReference>
<dbReference type="RefSeq" id="NP_001183998.1">
    <property type="nucleotide sequence ID" value="NM_001197069.1"/>
</dbReference>
<dbReference type="SMR" id="Q7SYS2"/>
<dbReference type="BioGRID" id="99975">
    <property type="interactions" value="1"/>
</dbReference>
<dbReference type="IntAct" id="Q7SYS2">
    <property type="interactions" value="1"/>
</dbReference>
<dbReference type="GeneID" id="398645"/>
<dbReference type="KEGG" id="xla:398645"/>
<dbReference type="AGR" id="Xenbase:XB-GENE-940537"/>
<dbReference type="CTD" id="398645"/>
<dbReference type="Xenbase" id="XB-GENE-940537">
    <property type="gene designation" value="nifk.S"/>
</dbReference>
<dbReference type="OMA" id="FECKDVA"/>
<dbReference type="OrthoDB" id="21467at2759"/>
<dbReference type="Proteomes" id="UP000186698">
    <property type="component" value="Chromosome 9_10S"/>
</dbReference>
<dbReference type="Bgee" id="398645">
    <property type="expression patterns" value="Expressed in neurula embryo and 19 other cell types or tissues"/>
</dbReference>
<dbReference type="GO" id="GO:0005730">
    <property type="term" value="C:nucleolus"/>
    <property type="evidence" value="ECO:0000318"/>
    <property type="project" value="GO_Central"/>
</dbReference>
<dbReference type="GO" id="GO:0003723">
    <property type="term" value="F:RNA binding"/>
    <property type="evidence" value="ECO:0000318"/>
    <property type="project" value="GO_Central"/>
</dbReference>
<dbReference type="CDD" id="cd12307">
    <property type="entry name" value="RRM_NIFK_like"/>
    <property type="match status" value="1"/>
</dbReference>
<dbReference type="Gene3D" id="3.30.70.330">
    <property type="match status" value="1"/>
</dbReference>
<dbReference type="InterPro" id="IPR021043">
    <property type="entry name" value="NIFK_FHA_Ki67-binding"/>
</dbReference>
<dbReference type="InterPro" id="IPR012677">
    <property type="entry name" value="Nucleotide-bd_a/b_plait_sf"/>
</dbReference>
<dbReference type="InterPro" id="IPR035979">
    <property type="entry name" value="RBD_domain_sf"/>
</dbReference>
<dbReference type="InterPro" id="IPR000504">
    <property type="entry name" value="RRM_dom"/>
</dbReference>
<dbReference type="PANTHER" id="PTHR46754">
    <property type="entry name" value="MKI67 FHA DOMAIN-INTERACTING NUCLEOLAR PHOSPHOPROTEIN"/>
    <property type="match status" value="1"/>
</dbReference>
<dbReference type="Pfam" id="PF12196">
    <property type="entry name" value="hNIFK_binding"/>
    <property type="match status" value="1"/>
</dbReference>
<dbReference type="Pfam" id="PF00076">
    <property type="entry name" value="RRM_1"/>
    <property type="match status" value="1"/>
</dbReference>
<dbReference type="SMART" id="SM00360">
    <property type="entry name" value="RRM"/>
    <property type="match status" value="1"/>
</dbReference>
<dbReference type="SUPFAM" id="SSF54928">
    <property type="entry name" value="RNA-binding domain, RBD"/>
    <property type="match status" value="1"/>
</dbReference>
<dbReference type="PROSITE" id="PS50102">
    <property type="entry name" value="RRM"/>
    <property type="match status" value="1"/>
</dbReference>
<protein>
    <recommendedName>
        <fullName>MKI67 FHA domain-interacting nucleolar phosphoprotein-like</fullName>
    </recommendedName>
</protein>
<proteinExistence type="evidence at transcript level"/>
<keyword id="KW-0539">Nucleus</keyword>
<keyword id="KW-1185">Reference proteome</keyword>
<keyword id="KW-0694">RNA-binding</keyword>
<feature type="chain" id="PRO_0000081632" description="MKI67 FHA domain-interacting nucleolar phosphoprotein-like">
    <location>
        <begin position="1"/>
        <end position="278"/>
    </location>
</feature>
<feature type="domain" description="RRM" evidence="2">
    <location>
        <begin position="41"/>
        <end position="119"/>
    </location>
</feature>
<gene>
    <name type="primary">nifk</name>
    <name type="synonym">mki67ipl</name>
</gene>
<comment type="subcellular location">
    <subcellularLocation>
        <location evidence="1">Nucleus</location>
        <location evidence="1">Nucleolus</location>
    </subcellularLocation>
</comment>
<name>MK67I_XENLA</name>
<evidence type="ECO:0000250" key="1"/>
<evidence type="ECO:0000255" key="2">
    <source>
        <dbReference type="PROSITE-ProRule" id="PRU00176"/>
    </source>
</evidence>
<reference key="1">
    <citation type="submission" date="2006-08" db="EMBL/GenBank/DDBJ databases">
        <authorList>
            <consortium name="NIH - Xenopus Gene Collection (XGC) project"/>
        </authorList>
    </citation>
    <scope>NUCLEOTIDE SEQUENCE [LARGE SCALE MRNA]</scope>
    <source>
        <tissue>Embryo</tissue>
        <tissue>Spleen</tissue>
    </source>
</reference>
<sequence>MAEELVQSEKLLSLDPKLQEDFQQKVHDIRRKRKANALTPGVIYIGHIPKSLIEPQLQEYFNQFGTVTRLRLSRSKKTGNSKGYAYVEYECDEVAKIVADTMNNYLFCERLLKCEFVTPEKVHPRLFIGCNTRFRKPTKPAVTRYNSKRNKEEVKKMTQRMISKEYKLRKRLAEKGIDYDFPGFAAHREMRKELTCDANTSVSSQDPTPVCTPTVLERRKSVRLEQIEDEEEDDDEVVLKLPQRDDEVVVKLPQKVSSAAKRQKISKLGKKTNIKELK</sequence>